<keyword id="KW-0071">Autoinducer synthesis</keyword>
<keyword id="KW-0408">Iron</keyword>
<keyword id="KW-0456">Lyase</keyword>
<keyword id="KW-0479">Metal-binding</keyword>
<keyword id="KW-0673">Quorum sensing</keyword>
<keyword id="KW-1185">Reference proteome</keyword>
<accession>A1SZZ2</accession>
<proteinExistence type="inferred from homology"/>
<dbReference type="EC" id="4.4.1.21" evidence="1"/>
<dbReference type="EMBL" id="CP000510">
    <property type="protein sequence ID" value="ABM05057.1"/>
    <property type="molecule type" value="Genomic_DNA"/>
</dbReference>
<dbReference type="RefSeq" id="WP_011771609.1">
    <property type="nucleotide sequence ID" value="NC_008709.1"/>
</dbReference>
<dbReference type="SMR" id="A1SZZ2"/>
<dbReference type="STRING" id="357804.Ping_3371"/>
<dbReference type="KEGG" id="pin:Ping_3371"/>
<dbReference type="eggNOG" id="COG1854">
    <property type="taxonomic scope" value="Bacteria"/>
</dbReference>
<dbReference type="HOGENOM" id="CLU_107531_2_0_6"/>
<dbReference type="OrthoDB" id="9788129at2"/>
<dbReference type="BRENDA" id="4.4.1.21">
    <property type="organism ID" value="11857"/>
</dbReference>
<dbReference type="Proteomes" id="UP000000639">
    <property type="component" value="Chromosome"/>
</dbReference>
<dbReference type="GO" id="GO:0005506">
    <property type="term" value="F:iron ion binding"/>
    <property type="evidence" value="ECO:0007669"/>
    <property type="project" value="InterPro"/>
</dbReference>
<dbReference type="GO" id="GO:0043768">
    <property type="term" value="F:S-ribosylhomocysteine lyase activity"/>
    <property type="evidence" value="ECO:0007669"/>
    <property type="project" value="UniProtKB-UniRule"/>
</dbReference>
<dbReference type="GO" id="GO:0009372">
    <property type="term" value="P:quorum sensing"/>
    <property type="evidence" value="ECO:0007669"/>
    <property type="project" value="UniProtKB-UniRule"/>
</dbReference>
<dbReference type="Gene3D" id="3.30.1360.80">
    <property type="entry name" value="S-ribosylhomocysteinase (LuxS)"/>
    <property type="match status" value="1"/>
</dbReference>
<dbReference type="HAMAP" id="MF_00091">
    <property type="entry name" value="LuxS"/>
    <property type="match status" value="1"/>
</dbReference>
<dbReference type="InterPro" id="IPR037005">
    <property type="entry name" value="LuxS_sf"/>
</dbReference>
<dbReference type="InterPro" id="IPR011249">
    <property type="entry name" value="Metalloenz_LuxS/M16"/>
</dbReference>
<dbReference type="InterPro" id="IPR003815">
    <property type="entry name" value="S-ribosylhomocysteinase"/>
</dbReference>
<dbReference type="NCBIfam" id="NF002602">
    <property type="entry name" value="PRK02260.1-2"/>
    <property type="match status" value="1"/>
</dbReference>
<dbReference type="PANTHER" id="PTHR35799">
    <property type="entry name" value="S-RIBOSYLHOMOCYSTEINE LYASE"/>
    <property type="match status" value="1"/>
</dbReference>
<dbReference type="PANTHER" id="PTHR35799:SF1">
    <property type="entry name" value="S-RIBOSYLHOMOCYSTEINE LYASE"/>
    <property type="match status" value="1"/>
</dbReference>
<dbReference type="Pfam" id="PF02664">
    <property type="entry name" value="LuxS"/>
    <property type="match status" value="1"/>
</dbReference>
<dbReference type="PIRSF" id="PIRSF006160">
    <property type="entry name" value="AI2"/>
    <property type="match status" value="1"/>
</dbReference>
<dbReference type="PRINTS" id="PR01487">
    <property type="entry name" value="LUXSPROTEIN"/>
</dbReference>
<dbReference type="SUPFAM" id="SSF63411">
    <property type="entry name" value="LuxS/MPP-like metallohydrolase"/>
    <property type="match status" value="1"/>
</dbReference>
<organism>
    <name type="scientific">Psychromonas ingrahamii (strain DSM 17664 / CCUG 51855 / 37)</name>
    <dbReference type="NCBI Taxonomy" id="357804"/>
    <lineage>
        <taxon>Bacteria</taxon>
        <taxon>Pseudomonadati</taxon>
        <taxon>Pseudomonadota</taxon>
        <taxon>Gammaproteobacteria</taxon>
        <taxon>Alteromonadales</taxon>
        <taxon>Psychromonadaceae</taxon>
        <taxon>Psychromonas</taxon>
    </lineage>
</organism>
<reference key="1">
    <citation type="journal article" date="2008" name="BMC Genomics">
        <title>Genomics of an extreme psychrophile, Psychromonas ingrahamii.</title>
        <authorList>
            <person name="Riley M."/>
            <person name="Staley J.T."/>
            <person name="Danchin A."/>
            <person name="Wang T.Z."/>
            <person name="Brettin T.S."/>
            <person name="Hauser L.J."/>
            <person name="Land M.L."/>
            <person name="Thompson L.S."/>
        </authorList>
    </citation>
    <scope>NUCLEOTIDE SEQUENCE [LARGE SCALE GENOMIC DNA]</scope>
    <source>
        <strain>DSM 17664 / CCUG 51855 / 37</strain>
    </source>
</reference>
<protein>
    <recommendedName>
        <fullName evidence="1">S-ribosylhomocysteine lyase</fullName>
        <ecNumber evidence="1">4.4.1.21</ecNumber>
    </recommendedName>
    <alternativeName>
        <fullName evidence="1">AI-2 synthesis protein</fullName>
    </alternativeName>
    <alternativeName>
        <fullName evidence="1">Autoinducer-2 production protein LuxS</fullName>
    </alternativeName>
</protein>
<gene>
    <name evidence="1" type="primary">luxS</name>
    <name type="ordered locus">Ping_3371</name>
</gene>
<evidence type="ECO:0000255" key="1">
    <source>
        <dbReference type="HAMAP-Rule" id="MF_00091"/>
    </source>
</evidence>
<comment type="function">
    <text evidence="1">Involved in the synthesis of autoinducer 2 (AI-2) which is secreted by bacteria and is used to communicate both the cell density and the metabolic potential of the environment. The regulation of gene expression in response to changes in cell density is called quorum sensing. Catalyzes the transformation of S-ribosylhomocysteine (RHC) to homocysteine (HC) and 4,5-dihydroxy-2,3-pentadione (DPD).</text>
</comment>
<comment type="catalytic activity">
    <reaction evidence="1">
        <text>S-(5-deoxy-D-ribos-5-yl)-L-homocysteine = (S)-4,5-dihydroxypentane-2,3-dione + L-homocysteine</text>
        <dbReference type="Rhea" id="RHEA:17753"/>
        <dbReference type="ChEBI" id="CHEBI:29484"/>
        <dbReference type="ChEBI" id="CHEBI:58195"/>
        <dbReference type="ChEBI" id="CHEBI:58199"/>
        <dbReference type="EC" id="4.4.1.21"/>
    </reaction>
</comment>
<comment type="cofactor">
    <cofactor evidence="1">
        <name>Fe cation</name>
        <dbReference type="ChEBI" id="CHEBI:24875"/>
    </cofactor>
    <text evidence="1">Binds 1 Fe cation per subunit.</text>
</comment>
<comment type="subunit">
    <text evidence="1">Homodimer.</text>
</comment>
<comment type="similarity">
    <text evidence="1">Belongs to the LuxS family.</text>
</comment>
<sequence length="169" mass="18663">MPLLDSFTVDHTIMNAPAVRIAKTMQTPSKDTITVFDLRFTVPNEDLLSEKGIHTLEHLYAGFMRNHLNSPDVEIIDISPMGCRTGFYMSLIGSPSETEVANAWLAAMRDVLAVEHQEEIPELNKYQCGTYAMHSLAEAKTIAQAVIDAGVGTNKNADITLSDEQLKQL</sequence>
<name>LUXS_PSYIN</name>
<feature type="chain" id="PRO_0000298020" description="S-ribosylhomocysteine lyase">
    <location>
        <begin position="1"/>
        <end position="169"/>
    </location>
</feature>
<feature type="binding site" evidence="1">
    <location>
        <position position="54"/>
    </location>
    <ligand>
        <name>Fe cation</name>
        <dbReference type="ChEBI" id="CHEBI:24875"/>
    </ligand>
</feature>
<feature type="binding site" evidence="1">
    <location>
        <position position="58"/>
    </location>
    <ligand>
        <name>Fe cation</name>
        <dbReference type="ChEBI" id="CHEBI:24875"/>
    </ligand>
</feature>
<feature type="binding site" evidence="1">
    <location>
        <position position="128"/>
    </location>
    <ligand>
        <name>Fe cation</name>
        <dbReference type="ChEBI" id="CHEBI:24875"/>
    </ligand>
</feature>